<accession>Q3BP16</accession>
<reference key="1">
    <citation type="journal article" date="2005" name="J. Bacteriol.">
        <title>Insights into genome plasticity and pathogenicity of the plant pathogenic Bacterium Xanthomonas campestris pv. vesicatoria revealed by the complete genome sequence.</title>
        <authorList>
            <person name="Thieme F."/>
            <person name="Koebnik R."/>
            <person name="Bekel T."/>
            <person name="Berger C."/>
            <person name="Boch J."/>
            <person name="Buettner D."/>
            <person name="Caldana C."/>
            <person name="Gaigalat L."/>
            <person name="Goesmann A."/>
            <person name="Kay S."/>
            <person name="Kirchner O."/>
            <person name="Lanz C."/>
            <person name="Linke B."/>
            <person name="McHardy A.C."/>
            <person name="Meyer F."/>
            <person name="Mittenhuber G."/>
            <person name="Nies D.H."/>
            <person name="Niesbach-Kloesgen U."/>
            <person name="Patschkowski T."/>
            <person name="Rueckert C."/>
            <person name="Rupp O."/>
            <person name="Schneiker S."/>
            <person name="Schuster S.C."/>
            <person name="Vorhoelter F.J."/>
            <person name="Weber E."/>
            <person name="Puehler A."/>
            <person name="Bonas U."/>
            <person name="Bartels D."/>
            <person name="Kaiser O."/>
        </authorList>
    </citation>
    <scope>NUCLEOTIDE SEQUENCE [LARGE SCALE GENOMIC DNA]</scope>
    <source>
        <strain>85-10</strain>
    </source>
</reference>
<proteinExistence type="inferred from homology"/>
<name>ATPE_XANE5</name>
<gene>
    <name evidence="1" type="primary">atpC</name>
    <name type="ordered locus">XCV3766</name>
</gene>
<sequence>MSTIRCDIVSAEKEIFHGEATLVVATGELGELGIAPKHAPLITRLKPGKVVVTTANGEQLDFAISGGILEVQPQVVTILVDTAVRAQDIDEAAVRKVKEEAERLLANRGNTVDVAEAQRQLAEATVQLQALERLRRNLKH</sequence>
<organism>
    <name type="scientific">Xanthomonas euvesicatoria pv. vesicatoria (strain 85-10)</name>
    <name type="common">Xanthomonas campestris pv. vesicatoria</name>
    <dbReference type="NCBI Taxonomy" id="316273"/>
    <lineage>
        <taxon>Bacteria</taxon>
        <taxon>Pseudomonadati</taxon>
        <taxon>Pseudomonadota</taxon>
        <taxon>Gammaproteobacteria</taxon>
        <taxon>Lysobacterales</taxon>
        <taxon>Lysobacteraceae</taxon>
        <taxon>Xanthomonas</taxon>
    </lineage>
</organism>
<keyword id="KW-0066">ATP synthesis</keyword>
<keyword id="KW-0997">Cell inner membrane</keyword>
<keyword id="KW-1003">Cell membrane</keyword>
<keyword id="KW-0139">CF(1)</keyword>
<keyword id="KW-0375">Hydrogen ion transport</keyword>
<keyword id="KW-0406">Ion transport</keyword>
<keyword id="KW-0472">Membrane</keyword>
<keyword id="KW-0813">Transport</keyword>
<feature type="chain" id="PRO_0000265925" description="ATP synthase epsilon chain">
    <location>
        <begin position="1"/>
        <end position="140"/>
    </location>
</feature>
<dbReference type="EMBL" id="AM039952">
    <property type="protein sequence ID" value="CAJ25497.1"/>
    <property type="molecule type" value="Genomic_DNA"/>
</dbReference>
<dbReference type="RefSeq" id="WP_003484011.1">
    <property type="nucleotide sequence ID" value="NZ_CP017190.1"/>
</dbReference>
<dbReference type="SMR" id="Q3BP16"/>
<dbReference type="STRING" id="456327.BJD11_03835"/>
<dbReference type="KEGG" id="xcv:XCV3766"/>
<dbReference type="eggNOG" id="COG0355">
    <property type="taxonomic scope" value="Bacteria"/>
</dbReference>
<dbReference type="HOGENOM" id="CLU_084338_2_0_6"/>
<dbReference type="Proteomes" id="UP000007069">
    <property type="component" value="Chromosome"/>
</dbReference>
<dbReference type="GO" id="GO:0005886">
    <property type="term" value="C:plasma membrane"/>
    <property type="evidence" value="ECO:0007669"/>
    <property type="project" value="UniProtKB-SubCell"/>
</dbReference>
<dbReference type="GO" id="GO:0045259">
    <property type="term" value="C:proton-transporting ATP synthase complex"/>
    <property type="evidence" value="ECO:0007669"/>
    <property type="project" value="UniProtKB-KW"/>
</dbReference>
<dbReference type="GO" id="GO:0005524">
    <property type="term" value="F:ATP binding"/>
    <property type="evidence" value="ECO:0007669"/>
    <property type="project" value="UniProtKB-UniRule"/>
</dbReference>
<dbReference type="GO" id="GO:0046933">
    <property type="term" value="F:proton-transporting ATP synthase activity, rotational mechanism"/>
    <property type="evidence" value="ECO:0007669"/>
    <property type="project" value="UniProtKB-UniRule"/>
</dbReference>
<dbReference type="CDD" id="cd12152">
    <property type="entry name" value="F1-ATPase_delta"/>
    <property type="match status" value="1"/>
</dbReference>
<dbReference type="FunFam" id="1.20.5.440:FF:000005">
    <property type="entry name" value="ATP synthase epsilon chain"/>
    <property type="match status" value="1"/>
</dbReference>
<dbReference type="FunFam" id="2.60.15.10:FF:000001">
    <property type="entry name" value="ATP synthase epsilon chain"/>
    <property type="match status" value="1"/>
</dbReference>
<dbReference type="Gene3D" id="1.20.5.440">
    <property type="entry name" value="ATP synthase delta/epsilon subunit, C-terminal domain"/>
    <property type="match status" value="1"/>
</dbReference>
<dbReference type="Gene3D" id="2.60.15.10">
    <property type="entry name" value="F0F1 ATP synthase delta/epsilon subunit, N-terminal"/>
    <property type="match status" value="1"/>
</dbReference>
<dbReference type="HAMAP" id="MF_00530">
    <property type="entry name" value="ATP_synth_epsil_bac"/>
    <property type="match status" value="1"/>
</dbReference>
<dbReference type="InterPro" id="IPR036794">
    <property type="entry name" value="ATP_F1_dsu/esu_C_sf"/>
</dbReference>
<dbReference type="InterPro" id="IPR001469">
    <property type="entry name" value="ATP_synth_F1_dsu/esu"/>
</dbReference>
<dbReference type="InterPro" id="IPR020546">
    <property type="entry name" value="ATP_synth_F1_dsu/esu_N"/>
</dbReference>
<dbReference type="InterPro" id="IPR020547">
    <property type="entry name" value="ATP_synth_F1_esu_C"/>
</dbReference>
<dbReference type="InterPro" id="IPR036771">
    <property type="entry name" value="ATPsynth_dsu/esu_N"/>
</dbReference>
<dbReference type="NCBIfam" id="TIGR01216">
    <property type="entry name" value="ATP_synt_epsi"/>
    <property type="match status" value="1"/>
</dbReference>
<dbReference type="NCBIfam" id="NF001847">
    <property type="entry name" value="PRK00571.1-4"/>
    <property type="match status" value="1"/>
</dbReference>
<dbReference type="PANTHER" id="PTHR13822">
    <property type="entry name" value="ATP SYNTHASE DELTA/EPSILON CHAIN"/>
    <property type="match status" value="1"/>
</dbReference>
<dbReference type="PANTHER" id="PTHR13822:SF10">
    <property type="entry name" value="ATP SYNTHASE EPSILON CHAIN, CHLOROPLASTIC"/>
    <property type="match status" value="1"/>
</dbReference>
<dbReference type="Pfam" id="PF00401">
    <property type="entry name" value="ATP-synt_DE"/>
    <property type="match status" value="1"/>
</dbReference>
<dbReference type="Pfam" id="PF02823">
    <property type="entry name" value="ATP-synt_DE_N"/>
    <property type="match status" value="1"/>
</dbReference>
<dbReference type="SUPFAM" id="SSF46604">
    <property type="entry name" value="Epsilon subunit of F1F0-ATP synthase C-terminal domain"/>
    <property type="match status" value="1"/>
</dbReference>
<dbReference type="SUPFAM" id="SSF51344">
    <property type="entry name" value="Epsilon subunit of F1F0-ATP synthase N-terminal domain"/>
    <property type="match status" value="1"/>
</dbReference>
<comment type="function">
    <text evidence="1">Produces ATP from ADP in the presence of a proton gradient across the membrane.</text>
</comment>
<comment type="subunit">
    <text>F-type ATPases have 2 components, CF(1) - the catalytic core - and CF(0) - the membrane proton channel. CF(1) has five subunits: alpha(3), beta(3), gamma(1), delta(1), epsilon(1). CF(0) has three main subunits: a, b and c.</text>
</comment>
<comment type="subcellular location">
    <subcellularLocation>
        <location evidence="1">Cell inner membrane</location>
        <topology evidence="1">Peripheral membrane protein</topology>
    </subcellularLocation>
</comment>
<comment type="similarity">
    <text evidence="1">Belongs to the ATPase epsilon chain family.</text>
</comment>
<protein>
    <recommendedName>
        <fullName evidence="1">ATP synthase epsilon chain</fullName>
    </recommendedName>
    <alternativeName>
        <fullName evidence="1">ATP synthase F1 sector epsilon subunit</fullName>
    </alternativeName>
    <alternativeName>
        <fullName evidence="1">F-ATPase epsilon subunit</fullName>
    </alternativeName>
</protein>
<evidence type="ECO:0000255" key="1">
    <source>
        <dbReference type="HAMAP-Rule" id="MF_00530"/>
    </source>
</evidence>